<organism>
    <name type="scientific">Bacillus subtilis (strain 168)</name>
    <dbReference type="NCBI Taxonomy" id="224308"/>
    <lineage>
        <taxon>Bacteria</taxon>
        <taxon>Bacillati</taxon>
        <taxon>Bacillota</taxon>
        <taxon>Bacilli</taxon>
        <taxon>Bacillales</taxon>
        <taxon>Bacillaceae</taxon>
        <taxon>Bacillus</taxon>
    </lineage>
</organism>
<feature type="chain" id="PRO_0000334142" description="HTH-type transcriptional regulator CzcR">
    <location>
        <begin position="1"/>
        <end position="288"/>
    </location>
</feature>
<feature type="domain" description="HTH lysR-type" evidence="1">
    <location>
        <begin position="1"/>
        <end position="58"/>
    </location>
</feature>
<feature type="DNA-binding region" description="H-T-H motif" evidence="1">
    <location>
        <begin position="18"/>
        <end position="37"/>
    </location>
</feature>
<comment type="similarity">
    <text evidence="2">Belongs to the LysR transcriptional regulatory family.</text>
</comment>
<proteinExistence type="inferred from homology"/>
<keyword id="KW-0238">DNA-binding</keyword>
<keyword id="KW-1185">Reference proteome</keyword>
<keyword id="KW-0804">Transcription</keyword>
<keyword id="KW-0805">Transcription regulation</keyword>
<accession>P71025</accession>
<accession>O08188</accession>
<accession>Q796A6</accession>
<reference key="1">
    <citation type="journal article" date="1997" name="Gene">
        <title>A Bacillus subtilis locus encoding several gene products affecting transport of cations.</title>
        <authorList>
            <person name="Sturr M.G."/>
            <person name="Ablooglu A.J."/>
            <person name="Krulwich T.A."/>
        </authorList>
    </citation>
    <scope>NUCLEOTIDE SEQUENCE [GENOMIC DNA]</scope>
    <source>
        <strain>168 / JH642</strain>
    </source>
</reference>
<reference key="2">
    <citation type="journal article" date="1997" name="Microbiology">
        <title>Sequence of the Bacillus subtilis genome region in the vicinity of the lev operon reveals two new extracytoplasmic function RNA polymerase sigma factors SigV and SigZ.</title>
        <authorList>
            <person name="Sorokin A."/>
            <person name="Bolotin A."/>
            <person name="Purnelle B."/>
            <person name="Hilbert H."/>
            <person name="Lauber J."/>
            <person name="Duesterhoeft A."/>
            <person name="Ehrlich S.D."/>
        </authorList>
    </citation>
    <scope>NUCLEOTIDE SEQUENCE [GENOMIC DNA]</scope>
    <source>
        <strain>168</strain>
    </source>
</reference>
<reference key="3">
    <citation type="journal article" date="1997" name="Nature">
        <title>The complete genome sequence of the Gram-positive bacterium Bacillus subtilis.</title>
        <authorList>
            <person name="Kunst F."/>
            <person name="Ogasawara N."/>
            <person name="Moszer I."/>
            <person name="Albertini A.M."/>
            <person name="Alloni G."/>
            <person name="Azevedo V."/>
            <person name="Bertero M.G."/>
            <person name="Bessieres P."/>
            <person name="Bolotin A."/>
            <person name="Borchert S."/>
            <person name="Borriss R."/>
            <person name="Boursier L."/>
            <person name="Brans A."/>
            <person name="Braun M."/>
            <person name="Brignell S.C."/>
            <person name="Bron S."/>
            <person name="Brouillet S."/>
            <person name="Bruschi C.V."/>
            <person name="Caldwell B."/>
            <person name="Capuano V."/>
            <person name="Carter N.M."/>
            <person name="Choi S.-K."/>
            <person name="Codani J.-J."/>
            <person name="Connerton I.F."/>
            <person name="Cummings N.J."/>
            <person name="Daniel R.A."/>
            <person name="Denizot F."/>
            <person name="Devine K.M."/>
            <person name="Duesterhoeft A."/>
            <person name="Ehrlich S.D."/>
            <person name="Emmerson P.T."/>
            <person name="Entian K.-D."/>
            <person name="Errington J."/>
            <person name="Fabret C."/>
            <person name="Ferrari E."/>
            <person name="Foulger D."/>
            <person name="Fritz C."/>
            <person name="Fujita M."/>
            <person name="Fujita Y."/>
            <person name="Fuma S."/>
            <person name="Galizzi A."/>
            <person name="Galleron N."/>
            <person name="Ghim S.-Y."/>
            <person name="Glaser P."/>
            <person name="Goffeau A."/>
            <person name="Golightly E.J."/>
            <person name="Grandi G."/>
            <person name="Guiseppi G."/>
            <person name="Guy B.J."/>
            <person name="Haga K."/>
            <person name="Haiech J."/>
            <person name="Harwood C.R."/>
            <person name="Henaut A."/>
            <person name="Hilbert H."/>
            <person name="Holsappel S."/>
            <person name="Hosono S."/>
            <person name="Hullo M.-F."/>
            <person name="Itaya M."/>
            <person name="Jones L.-M."/>
            <person name="Joris B."/>
            <person name="Karamata D."/>
            <person name="Kasahara Y."/>
            <person name="Klaerr-Blanchard M."/>
            <person name="Klein C."/>
            <person name="Kobayashi Y."/>
            <person name="Koetter P."/>
            <person name="Koningstein G."/>
            <person name="Krogh S."/>
            <person name="Kumano M."/>
            <person name="Kurita K."/>
            <person name="Lapidus A."/>
            <person name="Lardinois S."/>
            <person name="Lauber J."/>
            <person name="Lazarevic V."/>
            <person name="Lee S.-M."/>
            <person name="Levine A."/>
            <person name="Liu H."/>
            <person name="Masuda S."/>
            <person name="Mauel C."/>
            <person name="Medigue C."/>
            <person name="Medina N."/>
            <person name="Mellado R.P."/>
            <person name="Mizuno M."/>
            <person name="Moestl D."/>
            <person name="Nakai S."/>
            <person name="Noback M."/>
            <person name="Noone D."/>
            <person name="O'Reilly M."/>
            <person name="Ogawa K."/>
            <person name="Ogiwara A."/>
            <person name="Oudega B."/>
            <person name="Park S.-H."/>
            <person name="Parro V."/>
            <person name="Pohl T.M."/>
            <person name="Portetelle D."/>
            <person name="Porwollik S."/>
            <person name="Prescott A.M."/>
            <person name="Presecan E."/>
            <person name="Pujic P."/>
            <person name="Purnelle B."/>
            <person name="Rapoport G."/>
            <person name="Rey M."/>
            <person name="Reynolds S."/>
            <person name="Rieger M."/>
            <person name="Rivolta C."/>
            <person name="Rocha E."/>
            <person name="Roche B."/>
            <person name="Rose M."/>
            <person name="Sadaie Y."/>
            <person name="Sato T."/>
            <person name="Scanlan E."/>
            <person name="Schleich S."/>
            <person name="Schroeter R."/>
            <person name="Scoffone F."/>
            <person name="Sekiguchi J."/>
            <person name="Sekowska A."/>
            <person name="Seror S.J."/>
            <person name="Serror P."/>
            <person name="Shin B.-S."/>
            <person name="Soldo B."/>
            <person name="Sorokin A."/>
            <person name="Tacconi E."/>
            <person name="Takagi T."/>
            <person name="Takahashi H."/>
            <person name="Takemaru K."/>
            <person name="Takeuchi M."/>
            <person name="Tamakoshi A."/>
            <person name="Tanaka T."/>
            <person name="Terpstra P."/>
            <person name="Tognoni A."/>
            <person name="Tosato V."/>
            <person name="Uchiyama S."/>
            <person name="Vandenbol M."/>
            <person name="Vannier F."/>
            <person name="Vassarotti A."/>
            <person name="Viari A."/>
            <person name="Wambutt R."/>
            <person name="Wedler E."/>
            <person name="Wedler H."/>
            <person name="Weitzenegger T."/>
            <person name="Winters P."/>
            <person name="Wipat A."/>
            <person name="Yamamoto H."/>
            <person name="Yamane K."/>
            <person name="Yasumoto K."/>
            <person name="Yata K."/>
            <person name="Yoshida K."/>
            <person name="Yoshikawa H.-F."/>
            <person name="Zumstein E."/>
            <person name="Yoshikawa H."/>
            <person name="Danchin A."/>
        </authorList>
    </citation>
    <scope>NUCLEOTIDE SEQUENCE [LARGE SCALE GENOMIC DNA]</scope>
    <source>
        <strain>168</strain>
    </source>
</reference>
<dbReference type="EMBL" id="U62055">
    <property type="protein sequence ID" value="AAB53031.1"/>
    <property type="molecule type" value="Genomic_DNA"/>
</dbReference>
<dbReference type="EMBL" id="U93876">
    <property type="protein sequence ID" value="AAB80909.1"/>
    <property type="molecule type" value="Genomic_DNA"/>
</dbReference>
<dbReference type="EMBL" id="AL009126">
    <property type="protein sequence ID" value="CAB14604.1"/>
    <property type="molecule type" value="Genomic_DNA"/>
</dbReference>
<dbReference type="PIR" id="F69973">
    <property type="entry name" value="F69973"/>
</dbReference>
<dbReference type="RefSeq" id="NP_390540.1">
    <property type="nucleotide sequence ID" value="NC_000964.3"/>
</dbReference>
<dbReference type="RefSeq" id="WP_004398672.1">
    <property type="nucleotide sequence ID" value="NZ_OZ025638.1"/>
</dbReference>
<dbReference type="SMR" id="P71025"/>
<dbReference type="FunCoup" id="P71025">
    <property type="interactions" value="92"/>
</dbReference>
<dbReference type="STRING" id="224308.BSU26630"/>
<dbReference type="PaxDb" id="224308-BSU26630"/>
<dbReference type="DNASU" id="937628"/>
<dbReference type="EnsemblBacteria" id="CAB14604">
    <property type="protein sequence ID" value="CAB14604"/>
    <property type="gene ID" value="BSU_26630"/>
</dbReference>
<dbReference type="GeneID" id="937628"/>
<dbReference type="KEGG" id="bsu:BSU26630"/>
<dbReference type="PATRIC" id="fig|224308.179.peg.2894"/>
<dbReference type="eggNOG" id="COG0583">
    <property type="taxonomic scope" value="Bacteria"/>
</dbReference>
<dbReference type="InParanoid" id="P71025"/>
<dbReference type="OrthoDB" id="8479357at2"/>
<dbReference type="PhylomeDB" id="P71025"/>
<dbReference type="BioCyc" id="BSUB:BSU26630-MONOMER"/>
<dbReference type="Proteomes" id="UP000001570">
    <property type="component" value="Chromosome"/>
</dbReference>
<dbReference type="GO" id="GO:0003700">
    <property type="term" value="F:DNA-binding transcription factor activity"/>
    <property type="evidence" value="ECO:0007669"/>
    <property type="project" value="InterPro"/>
</dbReference>
<dbReference type="GO" id="GO:0000976">
    <property type="term" value="F:transcription cis-regulatory region binding"/>
    <property type="evidence" value="ECO:0000318"/>
    <property type="project" value="GO_Central"/>
</dbReference>
<dbReference type="GO" id="GO:0006355">
    <property type="term" value="P:regulation of DNA-templated transcription"/>
    <property type="evidence" value="ECO:0000318"/>
    <property type="project" value="GO_Central"/>
</dbReference>
<dbReference type="CDD" id="cd08442">
    <property type="entry name" value="PBP2_YofA_SoxR_like"/>
    <property type="match status" value="1"/>
</dbReference>
<dbReference type="FunFam" id="1.10.10.10:FF:000001">
    <property type="entry name" value="LysR family transcriptional regulator"/>
    <property type="match status" value="1"/>
</dbReference>
<dbReference type="Gene3D" id="3.40.190.290">
    <property type="match status" value="1"/>
</dbReference>
<dbReference type="Gene3D" id="1.10.10.10">
    <property type="entry name" value="Winged helix-like DNA-binding domain superfamily/Winged helix DNA-binding domain"/>
    <property type="match status" value="1"/>
</dbReference>
<dbReference type="InterPro" id="IPR005119">
    <property type="entry name" value="LysR_subst-bd"/>
</dbReference>
<dbReference type="InterPro" id="IPR000847">
    <property type="entry name" value="Tscrpt_reg_HTH_LysR"/>
</dbReference>
<dbReference type="InterPro" id="IPR036388">
    <property type="entry name" value="WH-like_DNA-bd_sf"/>
</dbReference>
<dbReference type="InterPro" id="IPR036390">
    <property type="entry name" value="WH_DNA-bd_sf"/>
</dbReference>
<dbReference type="PANTHER" id="PTHR30126">
    <property type="entry name" value="HTH-TYPE TRANSCRIPTIONAL REGULATOR"/>
    <property type="match status" value="1"/>
</dbReference>
<dbReference type="PANTHER" id="PTHR30126:SF40">
    <property type="entry name" value="HTH-TYPE TRANSCRIPTIONAL REGULATOR GLTR"/>
    <property type="match status" value="1"/>
</dbReference>
<dbReference type="Pfam" id="PF00126">
    <property type="entry name" value="HTH_1"/>
    <property type="match status" value="1"/>
</dbReference>
<dbReference type="Pfam" id="PF03466">
    <property type="entry name" value="LysR_substrate"/>
    <property type="match status" value="1"/>
</dbReference>
<dbReference type="PRINTS" id="PR00039">
    <property type="entry name" value="HTHLYSR"/>
</dbReference>
<dbReference type="SUPFAM" id="SSF53850">
    <property type="entry name" value="Periplasmic binding protein-like II"/>
    <property type="match status" value="1"/>
</dbReference>
<dbReference type="SUPFAM" id="SSF46785">
    <property type="entry name" value="Winged helix' DNA-binding domain"/>
    <property type="match status" value="1"/>
</dbReference>
<dbReference type="PROSITE" id="PS50931">
    <property type="entry name" value="HTH_LYSR"/>
    <property type="match status" value="1"/>
</dbReference>
<name>CZCR_BACSU</name>
<gene>
    <name type="primary">czcR</name>
    <name type="synonym">czcD</name>
    <name type="synonym">yrdQ</name>
    <name type="ordered locus">BSU26630</name>
</gene>
<protein>
    <recommendedName>
        <fullName>HTH-type transcriptional regulator CzcR</fullName>
    </recommendedName>
</protein>
<sequence>MELRDLQIFKCVAHHKSITGAAKELNYVQSNVTARIKQLENELKTPLFNRHKKGVSLSPEGRKMIEYVNKILKDVEELEQVFLDTEIPSGILKIGTVETVRILPTIIASYYKKYPNVDLSLQAGLTEELIKKVMNHELDGAFISGPLKHSILEQYDVYTEKLTLVTSNKTFNIEDFSTTPILVFNQGCGYRSRLEQWLKDEGVLPNRMMEFNILETILNSVALGLGITVVPESAVMHLAVQGKVYCHPLPEKDSCISTIFIRHKDAYLTNSMRSLLKTIVEHKNMSMA</sequence>
<evidence type="ECO:0000255" key="1">
    <source>
        <dbReference type="PROSITE-ProRule" id="PRU00253"/>
    </source>
</evidence>
<evidence type="ECO:0000305" key="2"/>